<organism>
    <name type="scientific">Clostridium acetobutylicum (strain ATCC 824 / DSM 792 / JCM 1419 / IAM 19013 / LMG 5710 / NBRC 13948 / NRRL B-527 / VKM B-1787 / 2291 / W)</name>
    <dbReference type="NCBI Taxonomy" id="272562"/>
    <lineage>
        <taxon>Bacteria</taxon>
        <taxon>Bacillati</taxon>
        <taxon>Bacillota</taxon>
        <taxon>Clostridia</taxon>
        <taxon>Eubacteriales</taxon>
        <taxon>Clostridiaceae</taxon>
        <taxon>Clostridium</taxon>
    </lineage>
</organism>
<feature type="chain" id="PRO_0000094235" description="Elongation factor P">
    <location>
        <begin position="1"/>
        <end position="186"/>
    </location>
</feature>
<protein>
    <recommendedName>
        <fullName evidence="1">Elongation factor P</fullName>
        <shortName evidence="1">EF-P</shortName>
    </recommendedName>
</protein>
<accession>Q97HB8</accession>
<proteinExistence type="inferred from homology"/>
<evidence type="ECO:0000255" key="1">
    <source>
        <dbReference type="HAMAP-Rule" id="MF_00141"/>
    </source>
</evidence>
<sequence>MISAGDLRKGTTFELDGQVYNVVDFLHVKPGKGAAFVRTKLKNVITGAVTETTFNPTAKMQEAVIERKEMQYLYSDESFYYFMDQETYEQIPLSFDQVENAIKYLKENMFATIKFYKGEAFSVEAPNFVELKIVSCEPGVKGNTTSNVMKPATLETNAVVQVPLFVNEGETIRVDTRTGEYMERVQ</sequence>
<name>EFP_CLOAB</name>
<gene>
    <name evidence="1" type="primary">efp</name>
    <name type="ordered locus">CA_C2094</name>
</gene>
<dbReference type="EMBL" id="AE001437">
    <property type="protein sequence ID" value="AAK80053.1"/>
    <property type="molecule type" value="Genomic_DNA"/>
</dbReference>
<dbReference type="PIR" id="B97158">
    <property type="entry name" value="B97158"/>
</dbReference>
<dbReference type="RefSeq" id="NP_348713.1">
    <property type="nucleotide sequence ID" value="NC_003030.1"/>
</dbReference>
<dbReference type="RefSeq" id="WP_010965394.1">
    <property type="nucleotide sequence ID" value="NC_003030.1"/>
</dbReference>
<dbReference type="SMR" id="Q97HB8"/>
<dbReference type="STRING" id="272562.CA_C2094"/>
<dbReference type="GeneID" id="44998576"/>
<dbReference type="KEGG" id="cac:CA_C2094"/>
<dbReference type="PATRIC" id="fig|272562.8.peg.2297"/>
<dbReference type="eggNOG" id="COG0231">
    <property type="taxonomic scope" value="Bacteria"/>
</dbReference>
<dbReference type="HOGENOM" id="CLU_074944_0_1_9"/>
<dbReference type="OrthoDB" id="9801844at2"/>
<dbReference type="UniPathway" id="UPA00345"/>
<dbReference type="Proteomes" id="UP000000814">
    <property type="component" value="Chromosome"/>
</dbReference>
<dbReference type="GO" id="GO:0005737">
    <property type="term" value="C:cytoplasm"/>
    <property type="evidence" value="ECO:0007669"/>
    <property type="project" value="UniProtKB-SubCell"/>
</dbReference>
<dbReference type="GO" id="GO:0003746">
    <property type="term" value="F:translation elongation factor activity"/>
    <property type="evidence" value="ECO:0007669"/>
    <property type="project" value="UniProtKB-UniRule"/>
</dbReference>
<dbReference type="GO" id="GO:0043043">
    <property type="term" value="P:peptide biosynthetic process"/>
    <property type="evidence" value="ECO:0007669"/>
    <property type="project" value="InterPro"/>
</dbReference>
<dbReference type="CDD" id="cd04470">
    <property type="entry name" value="S1_EF-P_repeat_1"/>
    <property type="match status" value="1"/>
</dbReference>
<dbReference type="CDD" id="cd05794">
    <property type="entry name" value="S1_EF-P_repeat_2"/>
    <property type="match status" value="1"/>
</dbReference>
<dbReference type="FunFam" id="2.30.30.30:FF:000003">
    <property type="entry name" value="Elongation factor P"/>
    <property type="match status" value="1"/>
</dbReference>
<dbReference type="FunFam" id="2.40.50.140:FF:000004">
    <property type="entry name" value="Elongation factor P"/>
    <property type="match status" value="1"/>
</dbReference>
<dbReference type="FunFam" id="2.40.50.140:FF:000009">
    <property type="entry name" value="Elongation factor P"/>
    <property type="match status" value="1"/>
</dbReference>
<dbReference type="Gene3D" id="2.30.30.30">
    <property type="match status" value="1"/>
</dbReference>
<dbReference type="Gene3D" id="2.40.50.140">
    <property type="entry name" value="Nucleic acid-binding proteins"/>
    <property type="match status" value="2"/>
</dbReference>
<dbReference type="HAMAP" id="MF_00141">
    <property type="entry name" value="EF_P"/>
    <property type="match status" value="1"/>
</dbReference>
<dbReference type="InterPro" id="IPR015365">
    <property type="entry name" value="Elong-fact-P_C"/>
</dbReference>
<dbReference type="InterPro" id="IPR012340">
    <property type="entry name" value="NA-bd_OB-fold"/>
</dbReference>
<dbReference type="InterPro" id="IPR014722">
    <property type="entry name" value="Rib_uL2_dom2"/>
</dbReference>
<dbReference type="InterPro" id="IPR020599">
    <property type="entry name" value="Transl_elong_fac_P/YeiP"/>
</dbReference>
<dbReference type="InterPro" id="IPR013185">
    <property type="entry name" value="Transl_elong_KOW-like"/>
</dbReference>
<dbReference type="InterPro" id="IPR001059">
    <property type="entry name" value="Transl_elong_P/YeiP_cen"/>
</dbReference>
<dbReference type="InterPro" id="IPR011768">
    <property type="entry name" value="Transl_elongation_fac_P"/>
</dbReference>
<dbReference type="InterPro" id="IPR008991">
    <property type="entry name" value="Translation_prot_SH3-like_sf"/>
</dbReference>
<dbReference type="NCBIfam" id="TIGR00038">
    <property type="entry name" value="efp"/>
    <property type="match status" value="1"/>
</dbReference>
<dbReference type="NCBIfam" id="NF001810">
    <property type="entry name" value="PRK00529.1"/>
    <property type="match status" value="1"/>
</dbReference>
<dbReference type="PANTHER" id="PTHR30053">
    <property type="entry name" value="ELONGATION FACTOR P"/>
    <property type="match status" value="1"/>
</dbReference>
<dbReference type="PANTHER" id="PTHR30053:SF12">
    <property type="entry name" value="ELONGATION FACTOR P (EF-P) FAMILY PROTEIN"/>
    <property type="match status" value="1"/>
</dbReference>
<dbReference type="Pfam" id="PF01132">
    <property type="entry name" value="EFP"/>
    <property type="match status" value="1"/>
</dbReference>
<dbReference type="Pfam" id="PF08207">
    <property type="entry name" value="EFP_N"/>
    <property type="match status" value="1"/>
</dbReference>
<dbReference type="Pfam" id="PF09285">
    <property type="entry name" value="Elong-fact-P_C"/>
    <property type="match status" value="1"/>
</dbReference>
<dbReference type="PIRSF" id="PIRSF005901">
    <property type="entry name" value="EF-P"/>
    <property type="match status" value="1"/>
</dbReference>
<dbReference type="SMART" id="SM01185">
    <property type="entry name" value="EFP"/>
    <property type="match status" value="1"/>
</dbReference>
<dbReference type="SMART" id="SM00841">
    <property type="entry name" value="Elong-fact-P_C"/>
    <property type="match status" value="1"/>
</dbReference>
<dbReference type="SUPFAM" id="SSF50249">
    <property type="entry name" value="Nucleic acid-binding proteins"/>
    <property type="match status" value="2"/>
</dbReference>
<dbReference type="SUPFAM" id="SSF50104">
    <property type="entry name" value="Translation proteins SH3-like domain"/>
    <property type="match status" value="1"/>
</dbReference>
<reference key="1">
    <citation type="journal article" date="2001" name="J. Bacteriol.">
        <title>Genome sequence and comparative analysis of the solvent-producing bacterium Clostridium acetobutylicum.</title>
        <authorList>
            <person name="Noelling J."/>
            <person name="Breton G."/>
            <person name="Omelchenko M.V."/>
            <person name="Makarova K.S."/>
            <person name="Zeng Q."/>
            <person name="Gibson R."/>
            <person name="Lee H.M."/>
            <person name="Dubois J."/>
            <person name="Qiu D."/>
            <person name="Hitti J."/>
            <person name="Wolf Y.I."/>
            <person name="Tatusov R.L."/>
            <person name="Sabathe F."/>
            <person name="Doucette-Stamm L.A."/>
            <person name="Soucaille P."/>
            <person name="Daly M.J."/>
            <person name="Bennett G.N."/>
            <person name="Koonin E.V."/>
            <person name="Smith D.R."/>
        </authorList>
    </citation>
    <scope>NUCLEOTIDE SEQUENCE [LARGE SCALE GENOMIC DNA]</scope>
    <source>
        <strain>ATCC 824 / DSM 792 / JCM 1419 / IAM 19013 / LMG 5710 / NBRC 13948 / NRRL B-527 / VKM B-1787 / 2291 / W</strain>
    </source>
</reference>
<keyword id="KW-0963">Cytoplasm</keyword>
<keyword id="KW-0251">Elongation factor</keyword>
<keyword id="KW-0648">Protein biosynthesis</keyword>
<keyword id="KW-1185">Reference proteome</keyword>
<comment type="function">
    <text evidence="1">Involved in peptide bond synthesis. Stimulates efficient translation and peptide-bond synthesis on native or reconstituted 70S ribosomes in vitro. Probably functions indirectly by altering the affinity of the ribosome for aminoacyl-tRNA, thus increasing their reactivity as acceptors for peptidyl transferase.</text>
</comment>
<comment type="pathway">
    <text evidence="1">Protein biosynthesis; polypeptide chain elongation.</text>
</comment>
<comment type="subcellular location">
    <subcellularLocation>
        <location evidence="1">Cytoplasm</location>
    </subcellularLocation>
</comment>
<comment type="similarity">
    <text evidence="1">Belongs to the elongation factor P family.</text>
</comment>